<proteinExistence type="inferred from homology"/>
<sequence length="483" mass="52329">MSLFDHSLTKLHELLAAKEINVSDLVDVSYKRIADVDSKVKAFLTLDEERARDLAKKLDEVDASEKGVLFGMPIGIKDNIVTKGLRTTCSSKILENFDPIYDATVVTKLRGAETVTIGKINMDEFAMGSSNENSAFQVTTNPWNTDYVPGGSSGGSAAAVAAGEVPFALGSDTGGSIRQPAAYCGVVGLKPTYGRVSRYGLVAFASSLDQIGPITRTVEDNAYLLEAIAGHCPADSTSADLPVPPYRESLTGEIKGLRIGVPSEYIGDGVSEEMRKAVFDALNVLEKEGAVWEEVSLPYSKYALAAYYVIASSEASANLARFDGVRYGYRTDNADNLLDMYKNTRAEGFGDEVKRRIMLGTFALSSGYYDAYYKKAQQVRTLIKKDFDDVFTNYDVIIGPTTPTPAFKIGAKTDDPLTMYANDILTIPVNLAGVPALSLPCGFKDGLPLGLQIIGKHFDEATIYRVADVYEKATNFSKEKPSL</sequence>
<protein>
    <recommendedName>
        <fullName evidence="1">Glutamyl-tRNA(Gln) amidotransferase subunit A</fullName>
        <shortName evidence="1">Glu-ADT subunit A</shortName>
        <ecNumber evidence="1">6.3.5.7</ecNumber>
    </recommendedName>
</protein>
<organism>
    <name type="scientific">Shouchella clausii (strain KSM-K16)</name>
    <name type="common">Alkalihalobacillus clausii</name>
    <dbReference type="NCBI Taxonomy" id="66692"/>
    <lineage>
        <taxon>Bacteria</taxon>
        <taxon>Bacillati</taxon>
        <taxon>Bacillota</taxon>
        <taxon>Bacilli</taxon>
        <taxon>Bacillales</taxon>
        <taxon>Bacillaceae</taxon>
        <taxon>Shouchella</taxon>
    </lineage>
</organism>
<evidence type="ECO:0000255" key="1">
    <source>
        <dbReference type="HAMAP-Rule" id="MF_00120"/>
    </source>
</evidence>
<reference key="1">
    <citation type="submission" date="2003-10" db="EMBL/GenBank/DDBJ databases">
        <title>The complete genome sequence of the alkaliphilic Bacillus clausii KSM-K16.</title>
        <authorList>
            <person name="Takaki Y."/>
            <person name="Kageyama Y."/>
            <person name="Shimamura S."/>
            <person name="Suzuki H."/>
            <person name="Nishi S."/>
            <person name="Hatada Y."/>
            <person name="Kawai S."/>
            <person name="Ito S."/>
            <person name="Horikoshi K."/>
        </authorList>
    </citation>
    <scope>NUCLEOTIDE SEQUENCE [LARGE SCALE GENOMIC DNA]</scope>
    <source>
        <strain>KSM-K16</strain>
    </source>
</reference>
<name>GATA_SHOC1</name>
<accession>Q5WJ20</accession>
<feature type="chain" id="PRO_0000241072" description="Glutamyl-tRNA(Gln) amidotransferase subunit A">
    <location>
        <begin position="1"/>
        <end position="483"/>
    </location>
</feature>
<feature type="active site" description="Charge relay system" evidence="1">
    <location>
        <position position="77"/>
    </location>
</feature>
<feature type="active site" description="Charge relay system" evidence="1">
    <location>
        <position position="152"/>
    </location>
</feature>
<feature type="active site" description="Acyl-ester intermediate" evidence="1">
    <location>
        <position position="176"/>
    </location>
</feature>
<keyword id="KW-0067">ATP-binding</keyword>
<keyword id="KW-0436">Ligase</keyword>
<keyword id="KW-0547">Nucleotide-binding</keyword>
<keyword id="KW-0648">Protein biosynthesis</keyword>
<keyword id="KW-1185">Reference proteome</keyword>
<dbReference type="EC" id="6.3.5.7" evidence="1"/>
<dbReference type="EMBL" id="AP006627">
    <property type="protein sequence ID" value="BAD63635.1"/>
    <property type="molecule type" value="Genomic_DNA"/>
</dbReference>
<dbReference type="RefSeq" id="WP_011245950.1">
    <property type="nucleotide sequence ID" value="NC_006582.1"/>
</dbReference>
<dbReference type="SMR" id="Q5WJ20"/>
<dbReference type="STRING" id="66692.ABC1097"/>
<dbReference type="KEGG" id="bcl:ABC1097"/>
<dbReference type="eggNOG" id="COG0154">
    <property type="taxonomic scope" value="Bacteria"/>
</dbReference>
<dbReference type="HOGENOM" id="CLU_009600_0_3_9"/>
<dbReference type="OrthoDB" id="9811471at2"/>
<dbReference type="Proteomes" id="UP000001168">
    <property type="component" value="Chromosome"/>
</dbReference>
<dbReference type="GO" id="GO:0030956">
    <property type="term" value="C:glutamyl-tRNA(Gln) amidotransferase complex"/>
    <property type="evidence" value="ECO:0007669"/>
    <property type="project" value="InterPro"/>
</dbReference>
<dbReference type="GO" id="GO:0005524">
    <property type="term" value="F:ATP binding"/>
    <property type="evidence" value="ECO:0007669"/>
    <property type="project" value="UniProtKB-KW"/>
</dbReference>
<dbReference type="GO" id="GO:0050567">
    <property type="term" value="F:glutaminyl-tRNA synthase (glutamine-hydrolyzing) activity"/>
    <property type="evidence" value="ECO:0007669"/>
    <property type="project" value="UniProtKB-UniRule"/>
</dbReference>
<dbReference type="GO" id="GO:0006412">
    <property type="term" value="P:translation"/>
    <property type="evidence" value="ECO:0007669"/>
    <property type="project" value="UniProtKB-UniRule"/>
</dbReference>
<dbReference type="Gene3D" id="3.90.1300.10">
    <property type="entry name" value="Amidase signature (AS) domain"/>
    <property type="match status" value="1"/>
</dbReference>
<dbReference type="HAMAP" id="MF_00120">
    <property type="entry name" value="GatA"/>
    <property type="match status" value="1"/>
</dbReference>
<dbReference type="InterPro" id="IPR000120">
    <property type="entry name" value="Amidase"/>
</dbReference>
<dbReference type="InterPro" id="IPR020556">
    <property type="entry name" value="Amidase_CS"/>
</dbReference>
<dbReference type="InterPro" id="IPR023631">
    <property type="entry name" value="Amidase_dom"/>
</dbReference>
<dbReference type="InterPro" id="IPR036928">
    <property type="entry name" value="AS_sf"/>
</dbReference>
<dbReference type="InterPro" id="IPR004412">
    <property type="entry name" value="GatA"/>
</dbReference>
<dbReference type="NCBIfam" id="TIGR00132">
    <property type="entry name" value="gatA"/>
    <property type="match status" value="1"/>
</dbReference>
<dbReference type="PANTHER" id="PTHR11895:SF151">
    <property type="entry name" value="GLUTAMYL-TRNA(GLN) AMIDOTRANSFERASE SUBUNIT A"/>
    <property type="match status" value="1"/>
</dbReference>
<dbReference type="PANTHER" id="PTHR11895">
    <property type="entry name" value="TRANSAMIDASE"/>
    <property type="match status" value="1"/>
</dbReference>
<dbReference type="Pfam" id="PF01425">
    <property type="entry name" value="Amidase"/>
    <property type="match status" value="1"/>
</dbReference>
<dbReference type="SUPFAM" id="SSF75304">
    <property type="entry name" value="Amidase signature (AS) enzymes"/>
    <property type="match status" value="1"/>
</dbReference>
<dbReference type="PROSITE" id="PS00571">
    <property type="entry name" value="AMIDASES"/>
    <property type="match status" value="1"/>
</dbReference>
<gene>
    <name evidence="1" type="primary">gatA</name>
    <name type="ordered locus">ABC1097</name>
</gene>
<comment type="function">
    <text evidence="1">Allows the formation of correctly charged Gln-tRNA(Gln) through the transamidation of misacylated Glu-tRNA(Gln) in organisms which lack glutaminyl-tRNA synthetase. The reaction takes place in the presence of glutamine and ATP through an activated gamma-phospho-Glu-tRNA(Gln).</text>
</comment>
<comment type="catalytic activity">
    <reaction evidence="1">
        <text>L-glutamyl-tRNA(Gln) + L-glutamine + ATP + H2O = L-glutaminyl-tRNA(Gln) + L-glutamate + ADP + phosphate + H(+)</text>
        <dbReference type="Rhea" id="RHEA:17521"/>
        <dbReference type="Rhea" id="RHEA-COMP:9681"/>
        <dbReference type="Rhea" id="RHEA-COMP:9684"/>
        <dbReference type="ChEBI" id="CHEBI:15377"/>
        <dbReference type="ChEBI" id="CHEBI:15378"/>
        <dbReference type="ChEBI" id="CHEBI:29985"/>
        <dbReference type="ChEBI" id="CHEBI:30616"/>
        <dbReference type="ChEBI" id="CHEBI:43474"/>
        <dbReference type="ChEBI" id="CHEBI:58359"/>
        <dbReference type="ChEBI" id="CHEBI:78520"/>
        <dbReference type="ChEBI" id="CHEBI:78521"/>
        <dbReference type="ChEBI" id="CHEBI:456216"/>
        <dbReference type="EC" id="6.3.5.7"/>
    </reaction>
</comment>
<comment type="subunit">
    <text evidence="1">Heterotrimer of A, B and C subunits.</text>
</comment>
<comment type="similarity">
    <text evidence="1">Belongs to the amidase family. GatA subfamily.</text>
</comment>